<proteinExistence type="inferred from homology"/>
<comment type="function">
    <text evidence="1">Catalyzes the reversible interconversion of serine and glycine with tetrahydrofolate (THF) serving as the one-carbon carrier. This reaction serves as the major source of one-carbon groups required for the biosynthesis of purines, thymidylate, methionine, and other important biomolecules. Also exhibits THF-independent aldolase activity toward beta-hydroxyamino acids, producing glycine and aldehydes, via a retro-aldol mechanism.</text>
</comment>
<comment type="catalytic activity">
    <reaction evidence="1">
        <text>(6R)-5,10-methylene-5,6,7,8-tetrahydrofolate + glycine + H2O = (6S)-5,6,7,8-tetrahydrofolate + L-serine</text>
        <dbReference type="Rhea" id="RHEA:15481"/>
        <dbReference type="ChEBI" id="CHEBI:15377"/>
        <dbReference type="ChEBI" id="CHEBI:15636"/>
        <dbReference type="ChEBI" id="CHEBI:33384"/>
        <dbReference type="ChEBI" id="CHEBI:57305"/>
        <dbReference type="ChEBI" id="CHEBI:57453"/>
        <dbReference type="EC" id="2.1.2.1"/>
    </reaction>
</comment>
<comment type="cofactor">
    <cofactor evidence="1">
        <name>pyridoxal 5'-phosphate</name>
        <dbReference type="ChEBI" id="CHEBI:597326"/>
    </cofactor>
</comment>
<comment type="pathway">
    <text evidence="1">One-carbon metabolism; tetrahydrofolate interconversion.</text>
</comment>
<comment type="pathway">
    <text evidence="1">Amino-acid biosynthesis; glycine biosynthesis; glycine from L-serine: step 1/1.</text>
</comment>
<comment type="subunit">
    <text evidence="1">Homodimer.</text>
</comment>
<comment type="subcellular location">
    <subcellularLocation>
        <location evidence="1">Cytoplasm</location>
    </subcellularLocation>
</comment>
<comment type="similarity">
    <text evidence="1">Belongs to the SHMT family.</text>
</comment>
<reference key="1">
    <citation type="journal article" date="2004" name="PLoS Biol.">
        <title>Genomic insights into methanotrophy: the complete genome sequence of Methylococcus capsulatus (Bath).</title>
        <authorList>
            <person name="Ward N.L."/>
            <person name="Larsen O."/>
            <person name="Sakwa J."/>
            <person name="Bruseth L."/>
            <person name="Khouri H.M."/>
            <person name="Durkin A.S."/>
            <person name="Dimitrov G."/>
            <person name="Jiang L."/>
            <person name="Scanlan D."/>
            <person name="Kang K.H."/>
            <person name="Lewis M.R."/>
            <person name="Nelson K.E."/>
            <person name="Methe B.A."/>
            <person name="Wu M."/>
            <person name="Heidelberg J.F."/>
            <person name="Paulsen I.T."/>
            <person name="Fouts D.E."/>
            <person name="Ravel J."/>
            <person name="Tettelin H."/>
            <person name="Ren Q."/>
            <person name="Read T.D."/>
            <person name="DeBoy R.T."/>
            <person name="Seshadri R."/>
            <person name="Salzberg S.L."/>
            <person name="Jensen H.B."/>
            <person name="Birkeland N.K."/>
            <person name="Nelson W.C."/>
            <person name="Dodson R.J."/>
            <person name="Grindhaug S.H."/>
            <person name="Holt I.E."/>
            <person name="Eidhammer I."/>
            <person name="Jonasen I."/>
            <person name="Vanaken S."/>
            <person name="Utterback T.R."/>
            <person name="Feldblyum T.V."/>
            <person name="Fraser C.M."/>
            <person name="Lillehaug J.R."/>
            <person name="Eisen J.A."/>
        </authorList>
    </citation>
    <scope>NUCLEOTIDE SEQUENCE [LARGE SCALE GENOMIC DNA]</scope>
    <source>
        <strain>ATCC 33009 / NCIMB 11132 / Bath</strain>
    </source>
</reference>
<name>GLYA_METCA</name>
<dbReference type="EC" id="2.1.2.1" evidence="1"/>
<dbReference type="EMBL" id="AE017282">
    <property type="protein sequence ID" value="AAU92302.1"/>
    <property type="molecule type" value="Genomic_DNA"/>
</dbReference>
<dbReference type="RefSeq" id="WP_010960918.1">
    <property type="nucleotide sequence ID" value="NC_002977.6"/>
</dbReference>
<dbReference type="SMR" id="Q607U4"/>
<dbReference type="STRING" id="243233.MCA1660"/>
<dbReference type="GeneID" id="88223916"/>
<dbReference type="KEGG" id="mca:MCA1660"/>
<dbReference type="eggNOG" id="COG0112">
    <property type="taxonomic scope" value="Bacteria"/>
</dbReference>
<dbReference type="HOGENOM" id="CLU_022477_2_1_6"/>
<dbReference type="UniPathway" id="UPA00193"/>
<dbReference type="UniPathway" id="UPA00288">
    <property type="reaction ID" value="UER01023"/>
</dbReference>
<dbReference type="Proteomes" id="UP000006821">
    <property type="component" value="Chromosome"/>
</dbReference>
<dbReference type="GO" id="GO:0005829">
    <property type="term" value="C:cytosol"/>
    <property type="evidence" value="ECO:0007669"/>
    <property type="project" value="TreeGrafter"/>
</dbReference>
<dbReference type="GO" id="GO:0004372">
    <property type="term" value="F:glycine hydroxymethyltransferase activity"/>
    <property type="evidence" value="ECO:0007669"/>
    <property type="project" value="UniProtKB-UniRule"/>
</dbReference>
<dbReference type="GO" id="GO:0030170">
    <property type="term" value="F:pyridoxal phosphate binding"/>
    <property type="evidence" value="ECO:0007669"/>
    <property type="project" value="UniProtKB-UniRule"/>
</dbReference>
<dbReference type="GO" id="GO:0019264">
    <property type="term" value="P:glycine biosynthetic process from serine"/>
    <property type="evidence" value="ECO:0007669"/>
    <property type="project" value="UniProtKB-UniRule"/>
</dbReference>
<dbReference type="GO" id="GO:0035999">
    <property type="term" value="P:tetrahydrofolate interconversion"/>
    <property type="evidence" value="ECO:0007669"/>
    <property type="project" value="UniProtKB-UniRule"/>
</dbReference>
<dbReference type="CDD" id="cd00378">
    <property type="entry name" value="SHMT"/>
    <property type="match status" value="1"/>
</dbReference>
<dbReference type="FunFam" id="3.40.640.10:FF:000001">
    <property type="entry name" value="Serine hydroxymethyltransferase"/>
    <property type="match status" value="1"/>
</dbReference>
<dbReference type="FunFam" id="3.90.1150.10:FF:000003">
    <property type="entry name" value="Serine hydroxymethyltransferase"/>
    <property type="match status" value="1"/>
</dbReference>
<dbReference type="Gene3D" id="3.90.1150.10">
    <property type="entry name" value="Aspartate Aminotransferase, domain 1"/>
    <property type="match status" value="1"/>
</dbReference>
<dbReference type="Gene3D" id="3.40.640.10">
    <property type="entry name" value="Type I PLP-dependent aspartate aminotransferase-like (Major domain)"/>
    <property type="match status" value="1"/>
</dbReference>
<dbReference type="HAMAP" id="MF_00051">
    <property type="entry name" value="SHMT"/>
    <property type="match status" value="1"/>
</dbReference>
<dbReference type="InterPro" id="IPR015424">
    <property type="entry name" value="PyrdxlP-dep_Trfase"/>
</dbReference>
<dbReference type="InterPro" id="IPR015421">
    <property type="entry name" value="PyrdxlP-dep_Trfase_major"/>
</dbReference>
<dbReference type="InterPro" id="IPR015422">
    <property type="entry name" value="PyrdxlP-dep_Trfase_small"/>
</dbReference>
<dbReference type="InterPro" id="IPR001085">
    <property type="entry name" value="Ser_HO-MeTrfase"/>
</dbReference>
<dbReference type="InterPro" id="IPR049943">
    <property type="entry name" value="Ser_HO-MeTrfase-like"/>
</dbReference>
<dbReference type="InterPro" id="IPR019798">
    <property type="entry name" value="Ser_HO-MeTrfase_PLP_BS"/>
</dbReference>
<dbReference type="InterPro" id="IPR039429">
    <property type="entry name" value="SHMT-like_dom"/>
</dbReference>
<dbReference type="NCBIfam" id="NF000586">
    <property type="entry name" value="PRK00011.1"/>
    <property type="match status" value="1"/>
</dbReference>
<dbReference type="PANTHER" id="PTHR11680">
    <property type="entry name" value="SERINE HYDROXYMETHYLTRANSFERASE"/>
    <property type="match status" value="1"/>
</dbReference>
<dbReference type="PANTHER" id="PTHR11680:SF50">
    <property type="entry name" value="SERINE HYDROXYMETHYLTRANSFERASE"/>
    <property type="match status" value="1"/>
</dbReference>
<dbReference type="Pfam" id="PF00464">
    <property type="entry name" value="SHMT"/>
    <property type="match status" value="1"/>
</dbReference>
<dbReference type="PIRSF" id="PIRSF000412">
    <property type="entry name" value="SHMT"/>
    <property type="match status" value="1"/>
</dbReference>
<dbReference type="SUPFAM" id="SSF53383">
    <property type="entry name" value="PLP-dependent transferases"/>
    <property type="match status" value="1"/>
</dbReference>
<dbReference type="PROSITE" id="PS00096">
    <property type="entry name" value="SHMT"/>
    <property type="match status" value="1"/>
</dbReference>
<feature type="chain" id="PRO_0000113604" description="Serine hydroxymethyltransferase">
    <location>
        <begin position="1"/>
        <end position="418"/>
    </location>
</feature>
<feature type="binding site" evidence="1">
    <location>
        <position position="121"/>
    </location>
    <ligand>
        <name>(6S)-5,6,7,8-tetrahydrofolate</name>
        <dbReference type="ChEBI" id="CHEBI:57453"/>
    </ligand>
</feature>
<feature type="binding site" evidence="1">
    <location>
        <begin position="125"/>
        <end position="127"/>
    </location>
    <ligand>
        <name>(6S)-5,6,7,8-tetrahydrofolate</name>
        <dbReference type="ChEBI" id="CHEBI:57453"/>
    </ligand>
</feature>
<feature type="binding site" evidence="1">
    <location>
        <begin position="355"/>
        <end position="357"/>
    </location>
    <ligand>
        <name>(6S)-5,6,7,8-tetrahydrofolate</name>
        <dbReference type="ChEBI" id="CHEBI:57453"/>
    </ligand>
</feature>
<feature type="site" description="Plays an important role in substrate specificity" evidence="1">
    <location>
        <position position="229"/>
    </location>
</feature>
<feature type="modified residue" description="N6-(pyridoxal phosphate)lysine" evidence="1">
    <location>
        <position position="230"/>
    </location>
</feature>
<organism>
    <name type="scientific">Methylococcus capsulatus (strain ATCC 33009 / NCIMB 11132 / Bath)</name>
    <dbReference type="NCBI Taxonomy" id="243233"/>
    <lineage>
        <taxon>Bacteria</taxon>
        <taxon>Pseudomonadati</taxon>
        <taxon>Pseudomonadota</taxon>
        <taxon>Gammaproteobacteria</taxon>
        <taxon>Methylococcales</taxon>
        <taxon>Methylococcaceae</taxon>
        <taxon>Methylococcus</taxon>
    </lineage>
</organism>
<gene>
    <name evidence="1" type="primary">glyA</name>
    <name type="ordered locus">MCA1660</name>
</gene>
<accession>Q607U4</accession>
<protein>
    <recommendedName>
        <fullName evidence="1">Serine hydroxymethyltransferase</fullName>
        <shortName evidence="1">SHMT</shortName>
        <shortName evidence="1">Serine methylase</shortName>
        <ecNumber evidence="1">2.1.2.1</ecNumber>
    </recommendedName>
</protein>
<sequence length="418" mass="45673">MFSKGMEIAGFDDELWAAIQEEERRQEDHIELIASENYASPRVLQAQGTVLTNKYAEGYPGKRYYGGCEYVDIVETLAIERAKRLFGADYANVQPHSGSQANAAVYMALLKPGDTVLGMSLAHGGHLTHGAKVNFSGKIYNAVQYGLNPETGEIDYDQVDELAREHRPKMIVAGFSAYSQVVDWQRFRAIADSVGAWLMVDMAHVAGLIAAGLYPSPVQIADVTTTTTHKTLRGPRGGLILAKANPEVEKQLNSLVFPGIQGGPLMHVIAAKAVALKEALQPDFRHYQSAVMENADAMAKTFIERGYRIVSGGTRNHLFLVDLIQKGLTGKLAEEVLGRAHITVNKNAVPNDPQSPFVTSGIRVGTPAVTTRGFGVEECRLLAGWMCDIMDCPGDETVIGQVREEVTHLCRRFPVYAN</sequence>
<evidence type="ECO:0000255" key="1">
    <source>
        <dbReference type="HAMAP-Rule" id="MF_00051"/>
    </source>
</evidence>
<keyword id="KW-0028">Amino-acid biosynthesis</keyword>
<keyword id="KW-0963">Cytoplasm</keyword>
<keyword id="KW-0554">One-carbon metabolism</keyword>
<keyword id="KW-0663">Pyridoxal phosphate</keyword>
<keyword id="KW-1185">Reference proteome</keyword>
<keyword id="KW-0808">Transferase</keyword>